<proteinExistence type="inferred from homology"/>
<comment type="function">
    <text evidence="1">Master enzyme that delivers sulfur to a number of partners involved in Fe-S cluster assembly, tRNA modification or cofactor biosynthesis. Catalyzes the removal of elemental sulfur atoms from cysteine to produce alanine. Functions as a sulfur delivery protein for Fe-S cluster synthesis onto IscU, an Fe-S scaffold assembly protein, as well as other S acceptor proteins.</text>
</comment>
<comment type="catalytic activity">
    <reaction evidence="1">
        <text>(sulfur carrier)-H + L-cysteine = (sulfur carrier)-SH + L-alanine</text>
        <dbReference type="Rhea" id="RHEA:43892"/>
        <dbReference type="Rhea" id="RHEA-COMP:14737"/>
        <dbReference type="Rhea" id="RHEA-COMP:14739"/>
        <dbReference type="ChEBI" id="CHEBI:29917"/>
        <dbReference type="ChEBI" id="CHEBI:35235"/>
        <dbReference type="ChEBI" id="CHEBI:57972"/>
        <dbReference type="ChEBI" id="CHEBI:64428"/>
        <dbReference type="EC" id="2.8.1.7"/>
    </reaction>
</comment>
<comment type="cofactor">
    <cofactor evidence="1">
        <name>pyridoxal 5'-phosphate</name>
        <dbReference type="ChEBI" id="CHEBI:597326"/>
    </cofactor>
</comment>
<comment type="pathway">
    <text evidence="1">Cofactor biosynthesis; iron-sulfur cluster biosynthesis.</text>
</comment>
<comment type="subunit">
    <text evidence="1">Homodimer. Forms a heterotetramer with IscU, interacts with other sulfur acceptors.</text>
</comment>
<comment type="subcellular location">
    <subcellularLocation>
        <location evidence="1">Cytoplasm</location>
    </subcellularLocation>
</comment>
<comment type="similarity">
    <text evidence="1">Belongs to the class-V pyridoxal-phosphate-dependent aminotransferase family. NifS/IscS subfamily.</text>
</comment>
<dbReference type="EC" id="2.8.1.7" evidence="1"/>
<dbReference type="EMBL" id="CP000681">
    <property type="protein sequence ID" value="ABP75870.1"/>
    <property type="molecule type" value="Genomic_DNA"/>
</dbReference>
<dbReference type="SMR" id="A4Y7D7"/>
<dbReference type="STRING" id="319224.Sputcn32_2149"/>
<dbReference type="KEGG" id="spc:Sputcn32_2149"/>
<dbReference type="eggNOG" id="COG1104">
    <property type="taxonomic scope" value="Bacteria"/>
</dbReference>
<dbReference type="HOGENOM" id="CLU_003433_0_2_6"/>
<dbReference type="UniPathway" id="UPA00266"/>
<dbReference type="GO" id="GO:1990221">
    <property type="term" value="C:L-cysteine desulfurase complex"/>
    <property type="evidence" value="ECO:0007669"/>
    <property type="project" value="UniProtKB-ARBA"/>
</dbReference>
<dbReference type="GO" id="GO:0051537">
    <property type="term" value="F:2 iron, 2 sulfur cluster binding"/>
    <property type="evidence" value="ECO:0007669"/>
    <property type="project" value="UniProtKB-UniRule"/>
</dbReference>
<dbReference type="GO" id="GO:0031071">
    <property type="term" value="F:cysteine desulfurase activity"/>
    <property type="evidence" value="ECO:0007669"/>
    <property type="project" value="UniProtKB-UniRule"/>
</dbReference>
<dbReference type="GO" id="GO:0046872">
    <property type="term" value="F:metal ion binding"/>
    <property type="evidence" value="ECO:0007669"/>
    <property type="project" value="UniProtKB-KW"/>
</dbReference>
<dbReference type="GO" id="GO:0030170">
    <property type="term" value="F:pyridoxal phosphate binding"/>
    <property type="evidence" value="ECO:0007669"/>
    <property type="project" value="UniProtKB-UniRule"/>
</dbReference>
<dbReference type="GO" id="GO:0044571">
    <property type="term" value="P:[2Fe-2S] cluster assembly"/>
    <property type="evidence" value="ECO:0007669"/>
    <property type="project" value="UniProtKB-UniRule"/>
</dbReference>
<dbReference type="FunFam" id="3.40.640.10:FF:000003">
    <property type="entry name" value="Cysteine desulfurase IscS"/>
    <property type="match status" value="1"/>
</dbReference>
<dbReference type="FunFam" id="3.90.1150.10:FF:000002">
    <property type="entry name" value="Cysteine desulfurase IscS"/>
    <property type="match status" value="1"/>
</dbReference>
<dbReference type="Gene3D" id="3.90.1150.10">
    <property type="entry name" value="Aspartate Aminotransferase, domain 1"/>
    <property type="match status" value="1"/>
</dbReference>
<dbReference type="Gene3D" id="3.40.640.10">
    <property type="entry name" value="Type I PLP-dependent aspartate aminotransferase-like (Major domain)"/>
    <property type="match status" value="1"/>
</dbReference>
<dbReference type="HAMAP" id="MF_00331">
    <property type="entry name" value="Cys_desulf_IscS"/>
    <property type="match status" value="1"/>
</dbReference>
<dbReference type="InterPro" id="IPR000192">
    <property type="entry name" value="Aminotrans_V_dom"/>
</dbReference>
<dbReference type="InterPro" id="IPR020578">
    <property type="entry name" value="Aminotrans_V_PyrdxlP_BS"/>
</dbReference>
<dbReference type="InterPro" id="IPR010240">
    <property type="entry name" value="Cys_deSase_IscS"/>
</dbReference>
<dbReference type="InterPro" id="IPR016454">
    <property type="entry name" value="Cysteine_dSase"/>
</dbReference>
<dbReference type="InterPro" id="IPR015424">
    <property type="entry name" value="PyrdxlP-dep_Trfase"/>
</dbReference>
<dbReference type="InterPro" id="IPR015421">
    <property type="entry name" value="PyrdxlP-dep_Trfase_major"/>
</dbReference>
<dbReference type="InterPro" id="IPR015422">
    <property type="entry name" value="PyrdxlP-dep_Trfase_small"/>
</dbReference>
<dbReference type="NCBIfam" id="TIGR02006">
    <property type="entry name" value="IscS"/>
    <property type="match status" value="1"/>
</dbReference>
<dbReference type="NCBIfam" id="NF002806">
    <property type="entry name" value="PRK02948.1"/>
    <property type="match status" value="1"/>
</dbReference>
<dbReference type="NCBIfam" id="NF010611">
    <property type="entry name" value="PRK14012.1"/>
    <property type="match status" value="1"/>
</dbReference>
<dbReference type="PANTHER" id="PTHR11601:SF34">
    <property type="entry name" value="CYSTEINE DESULFURASE"/>
    <property type="match status" value="1"/>
</dbReference>
<dbReference type="PANTHER" id="PTHR11601">
    <property type="entry name" value="CYSTEINE DESULFURYLASE FAMILY MEMBER"/>
    <property type="match status" value="1"/>
</dbReference>
<dbReference type="Pfam" id="PF00266">
    <property type="entry name" value="Aminotran_5"/>
    <property type="match status" value="1"/>
</dbReference>
<dbReference type="PIRSF" id="PIRSF005572">
    <property type="entry name" value="NifS"/>
    <property type="match status" value="1"/>
</dbReference>
<dbReference type="SUPFAM" id="SSF53383">
    <property type="entry name" value="PLP-dependent transferases"/>
    <property type="match status" value="1"/>
</dbReference>
<dbReference type="PROSITE" id="PS00595">
    <property type="entry name" value="AA_TRANSFER_CLASS_5"/>
    <property type="match status" value="1"/>
</dbReference>
<protein>
    <recommendedName>
        <fullName evidence="1">Cysteine desulfurase IscS</fullName>
        <ecNumber evidence="1">2.8.1.7</ecNumber>
    </recommendedName>
</protein>
<accession>A4Y7D7</accession>
<sequence>MKLPIYLDYAATTPVDPRVAEKMFQYMTMDGIFGNPASRSHRYGWQAEEAVDIARNQVADLINADHREIVFTSGATESNNLAIKGVAHFYNKKGKHIITSKTEHKAVLDTCRQLEREGFEVTYLEPASNGIIPMERLEAAMRDDTILVSIMHVNNEIGVIHDIDAIGELCRSKGIIFHMDAAQSAGKLPIDVQATKVDLISISGHKMYGPKGIGALYVRRKPRIRLEAQMHGGGHERGMRSGTLPTHQIVGLGEAAAIAKAEMATDNERIGRLRDKLWNGIKHIEETYINGDLTQRFCGSLNVSFNYVEGESLMMALKDLAVSSGSACTSASLEPSYVLRALGLNDEMAHSSIRFSIGRFTTEEEIDHAIETITQSIDKLREMSPLWEMFKDGIDLNQVQWAHH</sequence>
<organism>
    <name type="scientific">Shewanella putrefaciens (strain CN-32 / ATCC BAA-453)</name>
    <dbReference type="NCBI Taxonomy" id="319224"/>
    <lineage>
        <taxon>Bacteria</taxon>
        <taxon>Pseudomonadati</taxon>
        <taxon>Pseudomonadota</taxon>
        <taxon>Gammaproteobacteria</taxon>
        <taxon>Alteromonadales</taxon>
        <taxon>Shewanellaceae</taxon>
        <taxon>Shewanella</taxon>
    </lineage>
</organism>
<keyword id="KW-0001">2Fe-2S</keyword>
<keyword id="KW-0963">Cytoplasm</keyword>
<keyword id="KW-0408">Iron</keyword>
<keyword id="KW-0411">Iron-sulfur</keyword>
<keyword id="KW-0479">Metal-binding</keyword>
<keyword id="KW-0663">Pyridoxal phosphate</keyword>
<keyword id="KW-0808">Transferase</keyword>
<gene>
    <name evidence="1" type="primary">iscS</name>
    <name type="ordered locus">Sputcn32_2149</name>
</gene>
<reference key="1">
    <citation type="submission" date="2007-04" db="EMBL/GenBank/DDBJ databases">
        <title>Complete sequence of Shewanella putrefaciens CN-32.</title>
        <authorList>
            <consortium name="US DOE Joint Genome Institute"/>
            <person name="Copeland A."/>
            <person name="Lucas S."/>
            <person name="Lapidus A."/>
            <person name="Barry K."/>
            <person name="Detter J.C."/>
            <person name="Glavina del Rio T."/>
            <person name="Hammon N."/>
            <person name="Israni S."/>
            <person name="Dalin E."/>
            <person name="Tice H."/>
            <person name="Pitluck S."/>
            <person name="Chain P."/>
            <person name="Malfatti S."/>
            <person name="Shin M."/>
            <person name="Vergez L."/>
            <person name="Schmutz J."/>
            <person name="Larimer F."/>
            <person name="Land M."/>
            <person name="Hauser L."/>
            <person name="Kyrpides N."/>
            <person name="Mikhailova N."/>
            <person name="Romine M.F."/>
            <person name="Fredrickson J."/>
            <person name="Tiedje J."/>
            <person name="Richardson P."/>
        </authorList>
    </citation>
    <scope>NUCLEOTIDE SEQUENCE [LARGE SCALE GENOMIC DNA]</scope>
    <source>
        <strain>CN-32 / ATCC BAA-453</strain>
    </source>
</reference>
<name>ISCS_SHEPC</name>
<feature type="chain" id="PRO_1000019447" description="Cysteine desulfurase IscS">
    <location>
        <begin position="1"/>
        <end position="404"/>
    </location>
</feature>
<feature type="active site" description="Cysteine persulfide intermediate" evidence="1">
    <location>
        <position position="328"/>
    </location>
</feature>
<feature type="binding site" evidence="1">
    <location>
        <begin position="75"/>
        <end position="76"/>
    </location>
    <ligand>
        <name>pyridoxal 5'-phosphate</name>
        <dbReference type="ChEBI" id="CHEBI:597326"/>
    </ligand>
</feature>
<feature type="binding site" evidence="1">
    <location>
        <position position="155"/>
    </location>
    <ligand>
        <name>pyridoxal 5'-phosphate</name>
        <dbReference type="ChEBI" id="CHEBI:597326"/>
    </ligand>
</feature>
<feature type="binding site" evidence="1">
    <location>
        <position position="183"/>
    </location>
    <ligand>
        <name>pyridoxal 5'-phosphate</name>
        <dbReference type="ChEBI" id="CHEBI:597326"/>
    </ligand>
</feature>
<feature type="binding site" evidence="1">
    <location>
        <begin position="203"/>
        <end position="205"/>
    </location>
    <ligand>
        <name>pyridoxal 5'-phosphate</name>
        <dbReference type="ChEBI" id="CHEBI:597326"/>
    </ligand>
</feature>
<feature type="binding site" evidence="1">
    <location>
        <position position="243"/>
    </location>
    <ligand>
        <name>pyridoxal 5'-phosphate</name>
        <dbReference type="ChEBI" id="CHEBI:597326"/>
    </ligand>
</feature>
<feature type="binding site" description="via persulfide group" evidence="1">
    <location>
        <position position="328"/>
    </location>
    <ligand>
        <name>[2Fe-2S] cluster</name>
        <dbReference type="ChEBI" id="CHEBI:190135"/>
        <note>ligand shared with IscU</note>
    </ligand>
</feature>
<feature type="modified residue" description="N6-(pyridoxal phosphate)lysine" evidence="1">
    <location>
        <position position="206"/>
    </location>
</feature>
<evidence type="ECO:0000255" key="1">
    <source>
        <dbReference type="HAMAP-Rule" id="MF_00331"/>
    </source>
</evidence>